<dbReference type="EC" id="1.2.7.7"/>
<dbReference type="EMBL" id="AE000666">
    <property type="protein sequence ID" value="AAB85209.1"/>
    <property type="status" value="ALT_INIT"/>
    <property type="molecule type" value="Genomic_DNA"/>
</dbReference>
<dbReference type="PIR" id="A69194">
    <property type="entry name" value="A69194"/>
</dbReference>
<dbReference type="RefSeq" id="WP_048060884.1">
    <property type="nucleotide sequence ID" value="NC_000916.1"/>
</dbReference>
<dbReference type="SMR" id="O26800"/>
<dbReference type="STRING" id="187420.MTH_704"/>
<dbReference type="PaxDb" id="187420-MTH_704"/>
<dbReference type="EnsemblBacteria" id="AAB85209">
    <property type="protein sequence ID" value="AAB85209"/>
    <property type="gene ID" value="MTH_704"/>
</dbReference>
<dbReference type="GeneID" id="1470665"/>
<dbReference type="GeneID" id="77401242"/>
<dbReference type="KEGG" id="mth:MTH_704"/>
<dbReference type="PATRIC" id="fig|187420.15.peg.687"/>
<dbReference type="HOGENOM" id="CLU_017038_0_0_2"/>
<dbReference type="InParanoid" id="O26800"/>
<dbReference type="Proteomes" id="UP000005223">
    <property type="component" value="Chromosome"/>
</dbReference>
<dbReference type="GO" id="GO:0043807">
    <property type="term" value="F:3-methyl-2-oxobutanoate dehydrogenase (ferredoxin) activity"/>
    <property type="evidence" value="ECO:0007669"/>
    <property type="project" value="UniProtKB-EC"/>
</dbReference>
<dbReference type="GO" id="GO:0006082">
    <property type="term" value="P:organic acid metabolic process"/>
    <property type="evidence" value="ECO:0007669"/>
    <property type="project" value="UniProtKB-ARBA"/>
</dbReference>
<dbReference type="GO" id="GO:0044272">
    <property type="term" value="P:sulfur compound biosynthetic process"/>
    <property type="evidence" value="ECO:0007669"/>
    <property type="project" value="UniProtKB-ARBA"/>
</dbReference>
<dbReference type="CDD" id="cd07034">
    <property type="entry name" value="TPP_PYR_PFOR_IOR-alpha_like"/>
    <property type="match status" value="1"/>
</dbReference>
<dbReference type="Gene3D" id="3.40.50.920">
    <property type="match status" value="1"/>
</dbReference>
<dbReference type="Gene3D" id="3.40.50.970">
    <property type="match status" value="1"/>
</dbReference>
<dbReference type="InterPro" id="IPR052368">
    <property type="entry name" value="2-oxoacid_oxidoreductase"/>
</dbReference>
<dbReference type="InterPro" id="IPR033412">
    <property type="entry name" value="PFOR_II"/>
</dbReference>
<dbReference type="InterPro" id="IPR002880">
    <property type="entry name" value="Pyrv_Fd/Flavodoxin_OxRdtase_N"/>
</dbReference>
<dbReference type="InterPro" id="IPR029061">
    <property type="entry name" value="THDP-binding"/>
</dbReference>
<dbReference type="InterPro" id="IPR009014">
    <property type="entry name" value="Transketo_C/PFOR_II"/>
</dbReference>
<dbReference type="NCBIfam" id="NF005507">
    <property type="entry name" value="PRK07119.1"/>
    <property type="match status" value="1"/>
</dbReference>
<dbReference type="PANTHER" id="PTHR43088:SF1">
    <property type="entry name" value="SUBUNIT OF PYRUVATE:FLAVODOXIN OXIDOREDUCTASE"/>
    <property type="match status" value="1"/>
</dbReference>
<dbReference type="PANTHER" id="PTHR43088">
    <property type="entry name" value="SUBUNIT OF PYRUVATE:FLAVODOXIN OXIDOREDUCTASE-RELATED"/>
    <property type="match status" value="1"/>
</dbReference>
<dbReference type="Pfam" id="PF17147">
    <property type="entry name" value="PFOR_II"/>
    <property type="match status" value="1"/>
</dbReference>
<dbReference type="Pfam" id="PF01855">
    <property type="entry name" value="POR_N"/>
    <property type="match status" value="1"/>
</dbReference>
<dbReference type="SUPFAM" id="SSF52518">
    <property type="entry name" value="Thiamin diphosphate-binding fold (THDP-binding)"/>
    <property type="match status" value="1"/>
</dbReference>
<dbReference type="SUPFAM" id="SSF52922">
    <property type="entry name" value="TK C-terminal domain-like"/>
    <property type="match status" value="1"/>
</dbReference>
<comment type="catalytic activity">
    <reaction>
        <text>3-methyl-2-oxobutanoate + 2 oxidized [2Fe-2S]-[ferredoxin] + CoA = 2-methylpropanoyl-CoA + 2 reduced [2Fe-2S]-[ferredoxin] + CO2 + H(+)</text>
        <dbReference type="Rhea" id="RHEA:11712"/>
        <dbReference type="Rhea" id="RHEA-COMP:10000"/>
        <dbReference type="Rhea" id="RHEA-COMP:10001"/>
        <dbReference type="ChEBI" id="CHEBI:11851"/>
        <dbReference type="ChEBI" id="CHEBI:15378"/>
        <dbReference type="ChEBI" id="CHEBI:16526"/>
        <dbReference type="ChEBI" id="CHEBI:33737"/>
        <dbReference type="ChEBI" id="CHEBI:33738"/>
        <dbReference type="ChEBI" id="CHEBI:57287"/>
        <dbReference type="ChEBI" id="CHEBI:57338"/>
        <dbReference type="EC" id="1.2.7.7"/>
    </reaction>
</comment>
<comment type="subunit">
    <text>Heterotrimer of the VorA, VorB and VorC subunits.</text>
</comment>
<comment type="sequence caution" evidence="2">
    <conflict type="erroneous initiation">
        <sequence resource="EMBL-CDS" id="AAB85209"/>
    </conflict>
</comment>
<gene>
    <name type="primary">vorB</name>
    <name type="ordered locus">MTH_704</name>
</gene>
<accession>O26800</accession>
<name>VORB_METTH</name>
<proteinExistence type="inferred from homology"/>
<reference key="1">
    <citation type="journal article" date="1997" name="J. Bacteriol.">
        <title>Complete genome sequence of Methanobacterium thermoautotrophicum deltaH: functional analysis and comparative genomics.</title>
        <authorList>
            <person name="Smith D.R."/>
            <person name="Doucette-Stamm L.A."/>
            <person name="Deloughery C."/>
            <person name="Lee H.-M."/>
            <person name="Dubois J."/>
            <person name="Aldredge T."/>
            <person name="Bashirzadeh R."/>
            <person name="Blakely D."/>
            <person name="Cook R."/>
            <person name="Gilbert K."/>
            <person name="Harrison D."/>
            <person name="Hoang L."/>
            <person name="Keagle P."/>
            <person name="Lumm W."/>
            <person name="Pothier B."/>
            <person name="Qiu D."/>
            <person name="Spadafora R."/>
            <person name="Vicare R."/>
            <person name="Wang Y."/>
            <person name="Wierzbowski J."/>
            <person name="Gibson R."/>
            <person name="Jiwani N."/>
            <person name="Caruso A."/>
            <person name="Bush D."/>
            <person name="Safer H."/>
            <person name="Patwell D."/>
            <person name="Prabhakar S."/>
            <person name="McDougall S."/>
            <person name="Shimer G."/>
            <person name="Goyal A."/>
            <person name="Pietrovski S."/>
            <person name="Church G.M."/>
            <person name="Daniels C.J."/>
            <person name="Mao J.-I."/>
            <person name="Rice P."/>
            <person name="Noelling J."/>
            <person name="Reeve J.N."/>
        </authorList>
    </citation>
    <scope>NUCLEOTIDE SEQUENCE [LARGE SCALE GENOMIC DNA]</scope>
    <source>
        <strain>ATCC 29096 / DSM 1053 / JCM 10044 / NBRC 100330 / Delta H</strain>
    </source>
</reference>
<sequence length="352" mass="38628">MATQMVKGNTAVIIGAMYAGCDCYFGYPITPASEILHEASRYFPMVGRKFVQAESEEAAINMVYGAAAAGHRVMTASSGPGISLKQEGISFLAGAELPAVIVDVMRAGPGLGNIGPEQGDYNQIVKGGGHGNYRNMVLAPSSVQEMCDLTMEAFELADKYRNPVVVLTDAVLGQMAEPLRFPEEAVEHRPDTSWAVCGNRETMKNLVTSIFLDFDELEEFNFYLQEKYARIEENEVRYEEYLVDDAEIVMVAYGISSRVARSAVETARAEGINVGLLRPITLFPFPSDRIRELADGGCRFISVEMSSGQMREDIRMASGCRDVELVNRMGGNLIELRDVLEKIREVAGDSSD</sequence>
<evidence type="ECO:0000250" key="1"/>
<evidence type="ECO:0000305" key="2"/>
<organism>
    <name type="scientific">Methanothermobacter thermautotrophicus (strain ATCC 29096 / DSM 1053 / JCM 10044 / NBRC 100330 / Delta H)</name>
    <name type="common">Methanobacterium thermoautotrophicum</name>
    <dbReference type="NCBI Taxonomy" id="187420"/>
    <lineage>
        <taxon>Archaea</taxon>
        <taxon>Methanobacteriati</taxon>
        <taxon>Methanobacteriota</taxon>
        <taxon>Methanomada group</taxon>
        <taxon>Methanobacteria</taxon>
        <taxon>Methanobacteriales</taxon>
        <taxon>Methanobacteriaceae</taxon>
        <taxon>Methanothermobacter</taxon>
    </lineage>
</organism>
<keyword id="KW-0560">Oxidoreductase</keyword>
<keyword id="KW-1185">Reference proteome</keyword>
<feature type="initiator methionine" description="Removed" evidence="1">
    <location>
        <position position="1"/>
    </location>
</feature>
<feature type="chain" id="PRO_0000099954" description="Ketoisovalerate oxidoreductase subunit VorB">
    <location>
        <begin position="2"/>
        <end position="352"/>
    </location>
</feature>
<protein>
    <recommendedName>
        <fullName>Ketoisovalerate oxidoreductase subunit VorB</fullName>
        <shortName>VOR</shortName>
        <ecNumber>1.2.7.7</ecNumber>
    </recommendedName>
    <alternativeName>
        <fullName>2-oxoisovalerate ferredoxin reductase subunit beta</fullName>
    </alternativeName>
    <alternativeName>
        <fullName>2-oxoisovalerate oxidoreductase beta chain</fullName>
    </alternativeName>
</protein>